<accession>Q9KCX2</accession>
<evidence type="ECO:0000255" key="1">
    <source>
        <dbReference type="HAMAP-Rule" id="MF_01400"/>
    </source>
</evidence>
<evidence type="ECO:0000255" key="2">
    <source>
        <dbReference type="PROSITE-ProRule" id="PRU01126"/>
    </source>
</evidence>
<sequence>MTEQNEELKKKLTPLQYEVTQNNGTEPPFRNEYYDLEAEGIYVDIVSGKPLFSSKDKYDAGCGWPSFTKPIDEEEVIEKEDRSHGMFRTEVRSKQADSHLGHVFPDGPGPNGLRYCINSAALRFIPKADLEKEGYGKYKALFD</sequence>
<proteinExistence type="inferred from homology"/>
<feature type="chain" id="PRO_0000140260" description="Peptide methionine sulfoxide reductase MsrB">
    <location>
        <begin position="1"/>
        <end position="143"/>
    </location>
</feature>
<feature type="domain" description="MsrB" evidence="2">
    <location>
        <begin position="5"/>
        <end position="127"/>
    </location>
</feature>
<feature type="active site" description="Nucleophile" evidence="2">
    <location>
        <position position="116"/>
    </location>
</feature>
<gene>
    <name evidence="1" type="primary">msrB</name>
    <name type="ordered locus">BH1447</name>
</gene>
<name>MSRB_HALH5</name>
<comment type="catalytic activity">
    <reaction evidence="1">
        <text>L-methionyl-[protein] + [thioredoxin]-disulfide + H2O = L-methionyl-(R)-S-oxide-[protein] + [thioredoxin]-dithiol</text>
        <dbReference type="Rhea" id="RHEA:24164"/>
        <dbReference type="Rhea" id="RHEA-COMP:10698"/>
        <dbReference type="Rhea" id="RHEA-COMP:10700"/>
        <dbReference type="Rhea" id="RHEA-COMP:12313"/>
        <dbReference type="Rhea" id="RHEA-COMP:12314"/>
        <dbReference type="ChEBI" id="CHEBI:15377"/>
        <dbReference type="ChEBI" id="CHEBI:16044"/>
        <dbReference type="ChEBI" id="CHEBI:29950"/>
        <dbReference type="ChEBI" id="CHEBI:45764"/>
        <dbReference type="ChEBI" id="CHEBI:50058"/>
        <dbReference type="EC" id="1.8.4.12"/>
    </reaction>
</comment>
<comment type="similarity">
    <text evidence="1">Belongs to the MsrB Met sulfoxide reductase family.</text>
</comment>
<protein>
    <recommendedName>
        <fullName evidence="1">Peptide methionine sulfoxide reductase MsrB</fullName>
        <ecNumber evidence="1">1.8.4.12</ecNumber>
    </recommendedName>
    <alternativeName>
        <fullName evidence="1">Peptide-methionine (R)-S-oxide reductase</fullName>
    </alternativeName>
</protein>
<reference key="1">
    <citation type="journal article" date="2000" name="Nucleic Acids Res.">
        <title>Complete genome sequence of the alkaliphilic bacterium Bacillus halodurans and genomic sequence comparison with Bacillus subtilis.</title>
        <authorList>
            <person name="Takami H."/>
            <person name="Nakasone K."/>
            <person name="Takaki Y."/>
            <person name="Maeno G."/>
            <person name="Sasaki R."/>
            <person name="Masui N."/>
            <person name="Fuji F."/>
            <person name="Hirama C."/>
            <person name="Nakamura Y."/>
            <person name="Ogasawara N."/>
            <person name="Kuhara S."/>
            <person name="Horikoshi K."/>
        </authorList>
    </citation>
    <scope>NUCLEOTIDE SEQUENCE [LARGE SCALE GENOMIC DNA]</scope>
    <source>
        <strain>ATCC BAA-125 / DSM 18197 / FERM 7344 / JCM 9153 / C-125</strain>
    </source>
</reference>
<organism>
    <name type="scientific">Halalkalibacterium halodurans (strain ATCC BAA-125 / DSM 18197 / FERM 7344 / JCM 9153 / C-125)</name>
    <name type="common">Bacillus halodurans</name>
    <dbReference type="NCBI Taxonomy" id="272558"/>
    <lineage>
        <taxon>Bacteria</taxon>
        <taxon>Bacillati</taxon>
        <taxon>Bacillota</taxon>
        <taxon>Bacilli</taxon>
        <taxon>Bacillales</taxon>
        <taxon>Bacillaceae</taxon>
        <taxon>Halalkalibacterium (ex Joshi et al. 2022)</taxon>
    </lineage>
</organism>
<keyword id="KW-0560">Oxidoreductase</keyword>
<keyword id="KW-1185">Reference proteome</keyword>
<dbReference type="EC" id="1.8.4.12" evidence="1"/>
<dbReference type="EMBL" id="BA000004">
    <property type="protein sequence ID" value="BAB05166.1"/>
    <property type="molecule type" value="Genomic_DNA"/>
</dbReference>
<dbReference type="PIR" id="G83830">
    <property type="entry name" value="G83830"/>
</dbReference>
<dbReference type="RefSeq" id="WP_010897612.1">
    <property type="nucleotide sequence ID" value="NC_002570.2"/>
</dbReference>
<dbReference type="SMR" id="Q9KCX2"/>
<dbReference type="STRING" id="272558.gene:10727345"/>
<dbReference type="KEGG" id="bha:BH1447"/>
<dbReference type="eggNOG" id="COG0229">
    <property type="taxonomic scope" value="Bacteria"/>
</dbReference>
<dbReference type="HOGENOM" id="CLU_031040_8_5_9"/>
<dbReference type="OrthoDB" id="4174719at2"/>
<dbReference type="Proteomes" id="UP000001258">
    <property type="component" value="Chromosome"/>
</dbReference>
<dbReference type="GO" id="GO:0005737">
    <property type="term" value="C:cytoplasm"/>
    <property type="evidence" value="ECO:0007669"/>
    <property type="project" value="TreeGrafter"/>
</dbReference>
<dbReference type="GO" id="GO:0033743">
    <property type="term" value="F:peptide-methionine (R)-S-oxide reductase activity"/>
    <property type="evidence" value="ECO:0007669"/>
    <property type="project" value="UniProtKB-UniRule"/>
</dbReference>
<dbReference type="GO" id="GO:0030091">
    <property type="term" value="P:protein repair"/>
    <property type="evidence" value="ECO:0007669"/>
    <property type="project" value="InterPro"/>
</dbReference>
<dbReference type="GO" id="GO:0006979">
    <property type="term" value="P:response to oxidative stress"/>
    <property type="evidence" value="ECO:0007669"/>
    <property type="project" value="InterPro"/>
</dbReference>
<dbReference type="FunFam" id="2.170.150.20:FF:000003">
    <property type="entry name" value="Peptide methionine sulfoxide reductase MsrB"/>
    <property type="match status" value="1"/>
</dbReference>
<dbReference type="Gene3D" id="2.170.150.20">
    <property type="entry name" value="Peptide methionine sulfoxide reductase"/>
    <property type="match status" value="1"/>
</dbReference>
<dbReference type="HAMAP" id="MF_01400">
    <property type="entry name" value="MsrB"/>
    <property type="match status" value="1"/>
</dbReference>
<dbReference type="InterPro" id="IPR028427">
    <property type="entry name" value="Met_Sox_Rdtase_MsrB"/>
</dbReference>
<dbReference type="InterPro" id="IPR002579">
    <property type="entry name" value="Met_Sox_Rdtase_MsrB_dom"/>
</dbReference>
<dbReference type="InterPro" id="IPR011057">
    <property type="entry name" value="Mss4-like_sf"/>
</dbReference>
<dbReference type="NCBIfam" id="TIGR00357">
    <property type="entry name" value="peptide-methionine (R)-S-oxide reductase MsrB"/>
    <property type="match status" value="1"/>
</dbReference>
<dbReference type="PANTHER" id="PTHR10173">
    <property type="entry name" value="METHIONINE SULFOXIDE REDUCTASE"/>
    <property type="match status" value="1"/>
</dbReference>
<dbReference type="PANTHER" id="PTHR10173:SF59">
    <property type="entry name" value="PEPTIDE METHIONINE SULFOXIDE REDUCTASE MSRA_MSRB"/>
    <property type="match status" value="1"/>
</dbReference>
<dbReference type="Pfam" id="PF01641">
    <property type="entry name" value="SelR"/>
    <property type="match status" value="1"/>
</dbReference>
<dbReference type="SUPFAM" id="SSF51316">
    <property type="entry name" value="Mss4-like"/>
    <property type="match status" value="1"/>
</dbReference>
<dbReference type="PROSITE" id="PS51790">
    <property type="entry name" value="MSRB"/>
    <property type="match status" value="1"/>
</dbReference>